<protein>
    <recommendedName>
        <fullName evidence="1">Small ribosomal subunit protein uS10</fullName>
    </recommendedName>
    <alternativeName>
        <fullName evidence="2">30S ribosomal protein S10</fullName>
    </alternativeName>
</protein>
<reference key="1">
    <citation type="submission" date="2008-08" db="EMBL/GenBank/DDBJ databases">
        <title>Complete sequence of Vibrio fischeri strain MJ11.</title>
        <authorList>
            <person name="Mandel M.J."/>
            <person name="Stabb E.V."/>
            <person name="Ruby E.G."/>
            <person name="Ferriera S."/>
            <person name="Johnson J."/>
            <person name="Kravitz S."/>
            <person name="Beeson K."/>
            <person name="Sutton G."/>
            <person name="Rogers Y.-H."/>
            <person name="Friedman R."/>
            <person name="Frazier M."/>
            <person name="Venter J.C."/>
        </authorList>
    </citation>
    <scope>NUCLEOTIDE SEQUENCE [LARGE SCALE GENOMIC DNA]</scope>
    <source>
        <strain>MJ11</strain>
    </source>
</reference>
<name>RS10_ALIFM</name>
<gene>
    <name evidence="1" type="primary">rpsJ</name>
    <name type="ordered locus">VFMJ11_0224</name>
</gene>
<organism>
    <name type="scientific">Aliivibrio fischeri (strain MJ11)</name>
    <name type="common">Vibrio fischeri</name>
    <dbReference type="NCBI Taxonomy" id="388396"/>
    <lineage>
        <taxon>Bacteria</taxon>
        <taxon>Pseudomonadati</taxon>
        <taxon>Pseudomonadota</taxon>
        <taxon>Gammaproteobacteria</taxon>
        <taxon>Vibrionales</taxon>
        <taxon>Vibrionaceae</taxon>
        <taxon>Aliivibrio</taxon>
    </lineage>
</organism>
<proteinExistence type="inferred from homology"/>
<dbReference type="EMBL" id="CP001139">
    <property type="protein sequence ID" value="ACH64958.1"/>
    <property type="molecule type" value="Genomic_DNA"/>
</dbReference>
<dbReference type="RefSeq" id="WP_005417222.1">
    <property type="nucleotide sequence ID" value="NC_011184.1"/>
</dbReference>
<dbReference type="SMR" id="B5FG08"/>
<dbReference type="GeneID" id="56276456"/>
<dbReference type="KEGG" id="vfm:VFMJ11_0224"/>
<dbReference type="HOGENOM" id="CLU_122625_1_3_6"/>
<dbReference type="Proteomes" id="UP000001857">
    <property type="component" value="Chromosome I"/>
</dbReference>
<dbReference type="GO" id="GO:1990904">
    <property type="term" value="C:ribonucleoprotein complex"/>
    <property type="evidence" value="ECO:0007669"/>
    <property type="project" value="UniProtKB-KW"/>
</dbReference>
<dbReference type="GO" id="GO:0005840">
    <property type="term" value="C:ribosome"/>
    <property type="evidence" value="ECO:0007669"/>
    <property type="project" value="UniProtKB-KW"/>
</dbReference>
<dbReference type="GO" id="GO:0003735">
    <property type="term" value="F:structural constituent of ribosome"/>
    <property type="evidence" value="ECO:0007669"/>
    <property type="project" value="InterPro"/>
</dbReference>
<dbReference type="GO" id="GO:0000049">
    <property type="term" value="F:tRNA binding"/>
    <property type="evidence" value="ECO:0007669"/>
    <property type="project" value="UniProtKB-UniRule"/>
</dbReference>
<dbReference type="GO" id="GO:0006412">
    <property type="term" value="P:translation"/>
    <property type="evidence" value="ECO:0007669"/>
    <property type="project" value="UniProtKB-UniRule"/>
</dbReference>
<dbReference type="FunFam" id="3.30.70.600:FF:000001">
    <property type="entry name" value="30S ribosomal protein S10"/>
    <property type="match status" value="1"/>
</dbReference>
<dbReference type="Gene3D" id="3.30.70.600">
    <property type="entry name" value="Ribosomal protein S10 domain"/>
    <property type="match status" value="1"/>
</dbReference>
<dbReference type="HAMAP" id="MF_00508">
    <property type="entry name" value="Ribosomal_uS10"/>
    <property type="match status" value="1"/>
</dbReference>
<dbReference type="InterPro" id="IPR001848">
    <property type="entry name" value="Ribosomal_uS10"/>
</dbReference>
<dbReference type="InterPro" id="IPR018268">
    <property type="entry name" value="Ribosomal_uS10_CS"/>
</dbReference>
<dbReference type="InterPro" id="IPR027486">
    <property type="entry name" value="Ribosomal_uS10_dom"/>
</dbReference>
<dbReference type="InterPro" id="IPR036838">
    <property type="entry name" value="Ribosomal_uS10_dom_sf"/>
</dbReference>
<dbReference type="NCBIfam" id="NF001861">
    <property type="entry name" value="PRK00596.1"/>
    <property type="match status" value="1"/>
</dbReference>
<dbReference type="NCBIfam" id="TIGR01049">
    <property type="entry name" value="rpsJ_bact"/>
    <property type="match status" value="1"/>
</dbReference>
<dbReference type="PANTHER" id="PTHR11700">
    <property type="entry name" value="30S RIBOSOMAL PROTEIN S10 FAMILY MEMBER"/>
    <property type="match status" value="1"/>
</dbReference>
<dbReference type="Pfam" id="PF00338">
    <property type="entry name" value="Ribosomal_S10"/>
    <property type="match status" value="1"/>
</dbReference>
<dbReference type="PRINTS" id="PR00971">
    <property type="entry name" value="RIBOSOMALS10"/>
</dbReference>
<dbReference type="SMART" id="SM01403">
    <property type="entry name" value="Ribosomal_S10"/>
    <property type="match status" value="1"/>
</dbReference>
<dbReference type="SUPFAM" id="SSF54999">
    <property type="entry name" value="Ribosomal protein S10"/>
    <property type="match status" value="1"/>
</dbReference>
<dbReference type="PROSITE" id="PS00361">
    <property type="entry name" value="RIBOSOMAL_S10"/>
    <property type="match status" value="1"/>
</dbReference>
<accession>B5FG08</accession>
<sequence length="103" mass="11753">MQNQRIRIRLKAFDYKLIDQSTAEIVETAKRTGAQVRGPIPLPTRKERFTVLTSPHVNKDARDQYEIRTHKRLIDIVEPTDKTVDALMRLDLAAGVDVQISLG</sequence>
<keyword id="KW-0687">Ribonucleoprotein</keyword>
<keyword id="KW-0689">Ribosomal protein</keyword>
<evidence type="ECO:0000255" key="1">
    <source>
        <dbReference type="HAMAP-Rule" id="MF_00508"/>
    </source>
</evidence>
<evidence type="ECO:0000305" key="2"/>
<comment type="function">
    <text evidence="1">Involved in the binding of tRNA to the ribosomes.</text>
</comment>
<comment type="subunit">
    <text evidence="1">Part of the 30S ribosomal subunit.</text>
</comment>
<comment type="similarity">
    <text evidence="1">Belongs to the universal ribosomal protein uS10 family.</text>
</comment>
<feature type="chain" id="PRO_1000127202" description="Small ribosomal subunit protein uS10">
    <location>
        <begin position="1"/>
        <end position="103"/>
    </location>
</feature>